<accession>Q2NHF0</accession>
<feature type="chain" id="PRO_0000319675" description="Phosphoribosyl-ATP pyrophosphatase">
    <location>
        <begin position="1"/>
        <end position="95"/>
    </location>
</feature>
<gene>
    <name evidence="1" type="primary">hisE</name>
    <name type="ordered locus">Msp_0267</name>
</gene>
<reference key="1">
    <citation type="journal article" date="2006" name="J. Bacteriol.">
        <title>The genome sequence of Methanosphaera stadtmanae reveals why this human intestinal archaeon is restricted to methanol and H2 for methane formation and ATP synthesis.</title>
        <authorList>
            <person name="Fricke W.F."/>
            <person name="Seedorf H."/>
            <person name="Henne A."/>
            <person name="Kruer M."/>
            <person name="Liesegang H."/>
            <person name="Hedderich R."/>
            <person name="Gottschalk G."/>
            <person name="Thauer R.K."/>
        </authorList>
    </citation>
    <scope>NUCLEOTIDE SEQUENCE [LARGE SCALE GENOMIC DNA]</scope>
    <source>
        <strain>ATCC 43021 / DSM 3091 / JCM 11832 / MCB-3</strain>
    </source>
</reference>
<organism>
    <name type="scientific">Methanosphaera stadtmanae (strain ATCC 43021 / DSM 3091 / JCM 11832 / MCB-3)</name>
    <dbReference type="NCBI Taxonomy" id="339860"/>
    <lineage>
        <taxon>Archaea</taxon>
        <taxon>Methanobacteriati</taxon>
        <taxon>Methanobacteriota</taxon>
        <taxon>Methanomada group</taxon>
        <taxon>Methanobacteria</taxon>
        <taxon>Methanobacteriales</taxon>
        <taxon>Methanobacteriaceae</taxon>
        <taxon>Methanosphaera</taxon>
    </lineage>
</organism>
<dbReference type="EC" id="3.6.1.31" evidence="1"/>
<dbReference type="EMBL" id="CP000102">
    <property type="protein sequence ID" value="ABC56683.1"/>
    <property type="molecule type" value="Genomic_DNA"/>
</dbReference>
<dbReference type="RefSeq" id="WP_011405883.1">
    <property type="nucleotide sequence ID" value="NC_007681.1"/>
</dbReference>
<dbReference type="SMR" id="Q2NHF0"/>
<dbReference type="STRING" id="339860.Msp_0267"/>
<dbReference type="GeneID" id="41324840"/>
<dbReference type="KEGG" id="mst:Msp_0267"/>
<dbReference type="eggNOG" id="arCOG02677">
    <property type="taxonomic scope" value="Archaea"/>
</dbReference>
<dbReference type="HOGENOM" id="CLU_123337_0_0_2"/>
<dbReference type="OrthoDB" id="39686at2157"/>
<dbReference type="UniPathway" id="UPA00031">
    <property type="reaction ID" value="UER00007"/>
</dbReference>
<dbReference type="Proteomes" id="UP000001931">
    <property type="component" value="Chromosome"/>
</dbReference>
<dbReference type="GO" id="GO:0005737">
    <property type="term" value="C:cytoplasm"/>
    <property type="evidence" value="ECO:0007669"/>
    <property type="project" value="UniProtKB-SubCell"/>
</dbReference>
<dbReference type="GO" id="GO:0005524">
    <property type="term" value="F:ATP binding"/>
    <property type="evidence" value="ECO:0007669"/>
    <property type="project" value="UniProtKB-KW"/>
</dbReference>
<dbReference type="GO" id="GO:0004636">
    <property type="term" value="F:phosphoribosyl-ATP diphosphatase activity"/>
    <property type="evidence" value="ECO:0007669"/>
    <property type="project" value="UniProtKB-UniRule"/>
</dbReference>
<dbReference type="GO" id="GO:0000105">
    <property type="term" value="P:L-histidine biosynthetic process"/>
    <property type="evidence" value="ECO:0007669"/>
    <property type="project" value="UniProtKB-UniRule"/>
</dbReference>
<dbReference type="CDD" id="cd11534">
    <property type="entry name" value="NTP-PPase_HisIE_like"/>
    <property type="match status" value="1"/>
</dbReference>
<dbReference type="Gene3D" id="1.10.287.1080">
    <property type="entry name" value="MazG-like"/>
    <property type="match status" value="1"/>
</dbReference>
<dbReference type="HAMAP" id="MF_01020">
    <property type="entry name" value="HisE"/>
    <property type="match status" value="1"/>
</dbReference>
<dbReference type="InterPro" id="IPR008179">
    <property type="entry name" value="HisE"/>
</dbReference>
<dbReference type="InterPro" id="IPR021130">
    <property type="entry name" value="PRib-ATP_PPHydrolase-like"/>
</dbReference>
<dbReference type="NCBIfam" id="TIGR03188">
    <property type="entry name" value="histidine_hisI"/>
    <property type="match status" value="1"/>
</dbReference>
<dbReference type="PANTHER" id="PTHR42945">
    <property type="entry name" value="HISTIDINE BIOSYNTHESIS BIFUNCTIONAL PROTEIN"/>
    <property type="match status" value="1"/>
</dbReference>
<dbReference type="PANTHER" id="PTHR42945:SF9">
    <property type="entry name" value="HISTIDINE BIOSYNTHESIS BIFUNCTIONAL PROTEIN HISIE"/>
    <property type="match status" value="1"/>
</dbReference>
<dbReference type="Pfam" id="PF01503">
    <property type="entry name" value="PRA-PH"/>
    <property type="match status" value="1"/>
</dbReference>
<dbReference type="SUPFAM" id="SSF101386">
    <property type="entry name" value="all-alpha NTP pyrophosphatases"/>
    <property type="match status" value="1"/>
</dbReference>
<name>HIS2_METST</name>
<proteinExistence type="inferred from homology"/>
<sequence>MKDEIIREVYDTLVDRKNNPIDSYTSKLMQDSDKKAEDKILEKLGEEATEVILASKNNEDLVHESADLIFFTILNLAYKGIPLDDVFDELISRHN</sequence>
<evidence type="ECO:0000255" key="1">
    <source>
        <dbReference type="HAMAP-Rule" id="MF_01020"/>
    </source>
</evidence>
<comment type="catalytic activity">
    <reaction evidence="1">
        <text>1-(5-phospho-beta-D-ribosyl)-ATP + H2O = 1-(5-phospho-beta-D-ribosyl)-5'-AMP + diphosphate + H(+)</text>
        <dbReference type="Rhea" id="RHEA:22828"/>
        <dbReference type="ChEBI" id="CHEBI:15377"/>
        <dbReference type="ChEBI" id="CHEBI:15378"/>
        <dbReference type="ChEBI" id="CHEBI:33019"/>
        <dbReference type="ChEBI" id="CHEBI:59457"/>
        <dbReference type="ChEBI" id="CHEBI:73183"/>
        <dbReference type="EC" id="3.6.1.31"/>
    </reaction>
</comment>
<comment type="pathway">
    <text evidence="1">Amino-acid biosynthesis; L-histidine biosynthesis; L-histidine from 5-phospho-alpha-D-ribose 1-diphosphate: step 2/9.</text>
</comment>
<comment type="subcellular location">
    <subcellularLocation>
        <location evidence="1">Cytoplasm</location>
    </subcellularLocation>
</comment>
<comment type="similarity">
    <text evidence="1">Belongs to the PRA-PH family.</text>
</comment>
<protein>
    <recommendedName>
        <fullName evidence="1">Phosphoribosyl-ATP pyrophosphatase</fullName>
        <shortName evidence="1">PRA-PH</shortName>
        <ecNumber evidence="1">3.6.1.31</ecNumber>
    </recommendedName>
</protein>
<keyword id="KW-0028">Amino-acid biosynthesis</keyword>
<keyword id="KW-0067">ATP-binding</keyword>
<keyword id="KW-0963">Cytoplasm</keyword>
<keyword id="KW-0368">Histidine biosynthesis</keyword>
<keyword id="KW-0378">Hydrolase</keyword>
<keyword id="KW-0547">Nucleotide-binding</keyword>
<keyword id="KW-1185">Reference proteome</keyword>